<comment type="function">
    <text evidence="1 3">Lignin degradation and detoxification of lignin-derived products (By similarity). In vitro, has activity towards 2,2'-azino-bis(3-ethylbenzthiazoline-6-sulfonic acid) (ABTS), catechol and hydroquinone but not towards 2,6-dimethoxy-phenol or guaiacol.</text>
</comment>
<comment type="catalytic activity">
    <reaction evidence="3">
        <text>4 hydroquinone + O2 = 4 benzosemiquinone + 2 H2O</text>
        <dbReference type="Rhea" id="RHEA:11276"/>
        <dbReference type="ChEBI" id="CHEBI:15377"/>
        <dbReference type="ChEBI" id="CHEBI:15379"/>
        <dbReference type="ChEBI" id="CHEBI:17594"/>
        <dbReference type="ChEBI" id="CHEBI:17977"/>
        <dbReference type="EC" id="1.10.3.2"/>
    </reaction>
</comment>
<comment type="cofactor">
    <cofactor evidence="2">
        <name>Cu cation</name>
        <dbReference type="ChEBI" id="CHEBI:23378"/>
    </cofactor>
    <text evidence="2">Binds 4 Cu cations per monomer.</text>
</comment>
<comment type="activity regulation">
    <text evidence="3">Inhibited by NaN(3) and SDS. Partially inhibited by Fe(2+), Fe(3+) and Hg(2+) but not by other metal ions at a concentration of 10 mM.</text>
</comment>
<comment type="biophysicochemical properties">
    <kinetics>
        <KM evidence="3">54.9 uM for ABTS (at pH 4)</KM>
        <KM evidence="3">10.2 uM for catechol (at pH 4)</KM>
        <KM evidence="3">12.6 uM for hydroquinone (at pH 4)</KM>
    </kinetics>
    <phDependence>
        <text evidence="3">Optimum pH is 4. Activity decreases at higher pH and is lost at pH 6.</text>
    </phDependence>
    <temperatureDependence>
        <text evidence="3">Optimum temperature is 60 degrees Celsius. After incubation at 80 degrees Celsius or 20 degrees Celsius for 5 minutes 50% activity remains. Activity is lost after incubation at 100 degrees Celsius for 5 minutes. After incubation at 60 degrees Celsius for 1 hour 18% activity remains.</text>
    </temperatureDependence>
</comment>
<comment type="subunit">
    <text evidence="3">Monomer.</text>
</comment>
<comment type="subcellular location">
    <subcellularLocation>
        <location evidence="1">Secreted</location>
    </subcellularLocation>
</comment>
<comment type="similarity">
    <text evidence="5">Belongs to the multicopper oxidase family.</text>
</comment>
<sequence>VTIGKEGTLT</sequence>
<organism>
    <name type="scientific">Lepiota magnispora</name>
    <name type="common">Mushroom</name>
    <name type="synonym">Lepiota ventriosospora</name>
    <dbReference type="NCBI Taxonomy" id="182864"/>
    <lineage>
        <taxon>Eukaryota</taxon>
        <taxon>Fungi</taxon>
        <taxon>Dikarya</taxon>
        <taxon>Basidiomycota</taxon>
        <taxon>Agaricomycotina</taxon>
        <taxon>Agaricomycetes</taxon>
        <taxon>Agaricomycetidae</taxon>
        <taxon>Agaricales</taxon>
        <taxon>Agaricineae</taxon>
        <taxon>Agaricaceae</taxon>
        <taxon>Lepiota</taxon>
    </lineage>
</organism>
<protein>
    <recommendedName>
        <fullName evidence="4">Laccase</fullName>
        <ecNumber evidence="3">1.10.3.2</ecNumber>
    </recommendedName>
    <alternativeName>
        <fullName evidence="1">Benzenediol:oxygen oxidoreductase</fullName>
    </alternativeName>
    <alternativeName>
        <fullName evidence="1">Diphenol oxidase</fullName>
    </alternativeName>
    <alternativeName>
        <fullName evidence="1">Urishiol oxidase</fullName>
    </alternativeName>
</protein>
<accession>B3EWG2</accession>
<keyword id="KW-0186">Copper</keyword>
<keyword id="KW-0903">Direct protein sequencing</keyword>
<keyword id="KW-0439">Lignin degradation</keyword>
<keyword id="KW-0479">Metal-binding</keyword>
<keyword id="KW-0560">Oxidoreductase</keyword>
<keyword id="KW-0964">Secreted</keyword>
<dbReference type="EC" id="1.10.3.2" evidence="3"/>
<dbReference type="GO" id="GO:0005576">
    <property type="term" value="C:extracellular region"/>
    <property type="evidence" value="ECO:0007669"/>
    <property type="project" value="UniProtKB-SubCell"/>
</dbReference>
<dbReference type="GO" id="GO:0052716">
    <property type="term" value="F:hydroquinone:oxygen oxidoreductase activity"/>
    <property type="evidence" value="ECO:0007669"/>
    <property type="project" value="UniProtKB-EC"/>
</dbReference>
<dbReference type="GO" id="GO:0046872">
    <property type="term" value="F:metal ion binding"/>
    <property type="evidence" value="ECO:0007669"/>
    <property type="project" value="UniProtKB-KW"/>
</dbReference>
<dbReference type="GO" id="GO:0046274">
    <property type="term" value="P:lignin catabolic process"/>
    <property type="evidence" value="ECO:0007669"/>
    <property type="project" value="UniProtKB-KW"/>
</dbReference>
<reference key="1">
    <citation type="journal article" date="2013" name="J. Mol. Catal., B Enzym.">
        <title>A laccase with inhibitory activity against HIV-1 reverse transcriptase from the mycorrhizal fungus Lepiota ventriosospora.</title>
        <authorList>
            <person name="Zhang G.-Q."/>
            <person name="Chen Q.-J."/>
            <person name="Wang H.-X."/>
            <person name="Ng T.B."/>
        </authorList>
    </citation>
    <scope>PROTEIN SEQUENCE</scope>
    <scope>CATALYTIC ACTIVITY</scope>
    <scope>ACTIVITY REGULATION</scope>
    <scope>BIOPHYSICOCHEMICAL PROPERTIES</scope>
    <scope>SUBUNIT</scope>
    <source>
        <tissue evidence="3">Fruiting body</tissue>
    </source>
</reference>
<evidence type="ECO:0000250" key="1">
    <source>
        <dbReference type="UniProtKB" id="P86351"/>
    </source>
</evidence>
<evidence type="ECO:0000250" key="2">
    <source>
        <dbReference type="UniProtKB" id="Q12718"/>
    </source>
</evidence>
<evidence type="ECO:0000269" key="3">
    <source ref="1"/>
</evidence>
<evidence type="ECO:0000303" key="4">
    <source ref="1"/>
</evidence>
<evidence type="ECO:0000305" key="5"/>
<feature type="chain" id="PRO_0000416968" description="Laccase" evidence="3">
    <location>
        <begin position="1"/>
        <end position="10" status="greater than"/>
    </location>
</feature>
<feature type="non-terminal residue" evidence="4">
    <location>
        <position position="10"/>
    </location>
</feature>
<name>LACC_LEPMG</name>
<proteinExistence type="evidence at protein level"/>